<feature type="chain" id="PRO_0000242637" description="PSTB2-interacting protein 1">
    <location>
        <begin position="1"/>
        <end position="517"/>
    </location>
</feature>
<proteinExistence type="evidence at protein level"/>
<keyword id="KW-1185">Reference proteome</keyword>
<reference key="1">
    <citation type="journal article" date="1997" name="Nature">
        <title>The nucleotide sequence of Saccharomyces cerevisiae chromosome XVI.</title>
        <authorList>
            <person name="Bussey H."/>
            <person name="Storms R.K."/>
            <person name="Ahmed A."/>
            <person name="Albermann K."/>
            <person name="Allen E."/>
            <person name="Ansorge W."/>
            <person name="Araujo R."/>
            <person name="Aparicio A."/>
            <person name="Barrell B.G."/>
            <person name="Badcock K."/>
            <person name="Benes V."/>
            <person name="Botstein D."/>
            <person name="Bowman S."/>
            <person name="Brueckner M."/>
            <person name="Carpenter J."/>
            <person name="Cherry J.M."/>
            <person name="Chung E."/>
            <person name="Churcher C.M."/>
            <person name="Coster F."/>
            <person name="Davis K."/>
            <person name="Davis R.W."/>
            <person name="Dietrich F.S."/>
            <person name="Delius H."/>
            <person name="DiPaolo T."/>
            <person name="Dubois E."/>
            <person name="Duesterhoeft A."/>
            <person name="Duncan M."/>
            <person name="Floeth M."/>
            <person name="Fortin N."/>
            <person name="Friesen J.D."/>
            <person name="Fritz C."/>
            <person name="Goffeau A."/>
            <person name="Hall J."/>
            <person name="Hebling U."/>
            <person name="Heumann K."/>
            <person name="Hilbert H."/>
            <person name="Hillier L.W."/>
            <person name="Hunicke-Smith S."/>
            <person name="Hyman R.W."/>
            <person name="Johnston M."/>
            <person name="Kalman S."/>
            <person name="Kleine K."/>
            <person name="Komp C."/>
            <person name="Kurdi O."/>
            <person name="Lashkari D."/>
            <person name="Lew H."/>
            <person name="Lin A."/>
            <person name="Lin D."/>
            <person name="Louis E.J."/>
            <person name="Marathe R."/>
            <person name="Messenguy F."/>
            <person name="Mewes H.-W."/>
            <person name="Mirtipati S."/>
            <person name="Moestl D."/>
            <person name="Mueller-Auer S."/>
            <person name="Namath A."/>
            <person name="Nentwich U."/>
            <person name="Oefner P."/>
            <person name="Pearson D."/>
            <person name="Petel F.X."/>
            <person name="Pohl T.M."/>
            <person name="Purnelle B."/>
            <person name="Rajandream M.A."/>
            <person name="Rechmann S."/>
            <person name="Rieger M."/>
            <person name="Riles L."/>
            <person name="Roberts D."/>
            <person name="Schaefer M."/>
            <person name="Scharfe M."/>
            <person name="Scherens B."/>
            <person name="Schramm S."/>
            <person name="Schroeder M."/>
            <person name="Sdicu A.-M."/>
            <person name="Tettelin H."/>
            <person name="Urrestarazu L.A."/>
            <person name="Ushinsky S."/>
            <person name="Vierendeels F."/>
            <person name="Vissers S."/>
            <person name="Voss H."/>
            <person name="Walsh S.V."/>
            <person name="Wambutt R."/>
            <person name="Wang Y."/>
            <person name="Wedler E."/>
            <person name="Wedler H."/>
            <person name="Winnett E."/>
            <person name="Zhong W.-W."/>
            <person name="Zollner A."/>
            <person name="Vo D.H."/>
            <person name="Hani J."/>
        </authorList>
    </citation>
    <scope>NUCLEOTIDE SEQUENCE [LARGE SCALE GENOMIC DNA]</scope>
    <source>
        <strain>ATCC 204508 / S288c</strain>
    </source>
</reference>
<reference key="2">
    <citation type="journal article" date="2014" name="G3 (Bethesda)">
        <title>The reference genome sequence of Saccharomyces cerevisiae: Then and now.</title>
        <authorList>
            <person name="Engel S.R."/>
            <person name="Dietrich F.S."/>
            <person name="Fisk D.G."/>
            <person name="Binkley G."/>
            <person name="Balakrishnan R."/>
            <person name="Costanzo M.C."/>
            <person name="Dwight S.S."/>
            <person name="Hitz B.C."/>
            <person name="Karra K."/>
            <person name="Nash R.S."/>
            <person name="Weng S."/>
            <person name="Wong E.D."/>
            <person name="Lloyd P."/>
            <person name="Skrzypek M.S."/>
            <person name="Miyasato S.R."/>
            <person name="Simison M."/>
            <person name="Cherry J.M."/>
        </authorList>
    </citation>
    <scope>GENOME REANNOTATION</scope>
    <source>
        <strain>ATCC 204508 / S288c</strain>
    </source>
</reference>
<reference key="3">
    <citation type="journal article" date="2014" name="J. Biol. Chem.">
        <title>An assembly of proteins and lipid domains regulates transport of phosphatidylserine to phosphatidylserine decarboxylase 2 in Saccharomyces cerevisiae.</title>
        <authorList>
            <person name="Riekhof W.R."/>
            <person name="Wu W.I."/>
            <person name="Jones J.L."/>
            <person name="Nikrad M."/>
            <person name="Chan M.M."/>
            <person name="Loewen C.J."/>
            <person name="Voelker D.R."/>
        </authorList>
    </citation>
    <scope>FUNCTION</scope>
    <scope>INTERACTION WITH PDR17 AND SCS2</scope>
</reference>
<comment type="function">
    <text evidence="1">Phosphatidic acid-binding protein involved in interorganelle phosphatidylserine (PtdSer) transport (PubMed:24366873). Linkks a PtdSer donor membrane (via binding of SCS2 and phosphatidic acid present in the donor membrane) with an acceptor membrane (via its interaction with PDR17), forming a zone of apposition that facilitates PtdSer transfer (PubMed:24366873).</text>
</comment>
<comment type="subunit">
    <text evidence="1">Interacts with PDR17/PSTB2 and SCS2.</text>
</comment>
<comment type="interaction">
    <interactant intactId="EBI-3719178">
        <id>Q08984</id>
    </interactant>
    <interactant intactId="EBI-2076838">
        <id>P53844</id>
        <label>PDR17</label>
    </interactant>
    <organismsDiffer>false</organismsDiffer>
    <experiments>4</experiments>
</comment>
<sequence length="517" mass="59389">MTTFRPLSSFEKKILTQSLNDQRNGTIFSSTYSKSLSRENDADWHSDEVTLGTNSSKDDSRLTLPLIATTLKRLIKSQPALFATVNEEWEFEPLKQLKTSDIVNVIEFETIKDKEVNCHWGVPPPYLLRHAFNKTRFVPGSNKPLWTLYVIDEALLVFHGHDVLFDIFSAANFHKLFLKELNEISTVTHSEDRILFDVNDINLSELKFPKSIYDSAKLHLPAMTPQIFHKQTQSFFKSIYYNTLKRPFGYLTNQTSLSSSVSATQLKKYNDILNAHTSLCGTTVFGIVNNQRFNYLKSIVNQEHICLRSFICGIAMICLKPLVKDFSGTIVFTIPINLRNHLGLGGSLGLFFKELRVECPLSLIDDELSANEFLTNSNDNEDNDDEFNERLMEYQFNKVTKHVSGFIMAKLRSWEKNGFNDDDIRRMKYDNDDDFHIQNSRTKLIQINDVSDISLSMNGDDKSFKIVSTGFTSSINRPTLMSLSYTYCEEMGLNICIHYPDSYNLESFVECFESFIE</sequence>
<protein>
    <recommendedName>
        <fullName evidence="2">PSTB2-interacting protein 1</fullName>
    </recommendedName>
</protein>
<gene>
    <name evidence="2" type="primary">PBI1</name>
    <name type="ordered locus">YPL272C</name>
</gene>
<organism>
    <name type="scientific">Saccharomyces cerevisiae (strain ATCC 204508 / S288c)</name>
    <name type="common">Baker's yeast</name>
    <dbReference type="NCBI Taxonomy" id="559292"/>
    <lineage>
        <taxon>Eukaryota</taxon>
        <taxon>Fungi</taxon>
        <taxon>Dikarya</taxon>
        <taxon>Ascomycota</taxon>
        <taxon>Saccharomycotina</taxon>
        <taxon>Saccharomycetes</taxon>
        <taxon>Saccharomycetales</taxon>
        <taxon>Saccharomycetaceae</taxon>
        <taxon>Saccharomyces</taxon>
    </lineage>
</organism>
<name>PBI1_YEAST</name>
<dbReference type="EMBL" id="Z73628">
    <property type="protein sequence ID" value="CAA98008.1"/>
    <property type="molecule type" value="Genomic_DNA"/>
</dbReference>
<dbReference type="EMBL" id="BK006949">
    <property type="protein sequence ID" value="DAA11164.1"/>
    <property type="molecule type" value="Genomic_DNA"/>
</dbReference>
<dbReference type="PIR" id="S65305">
    <property type="entry name" value="S65305"/>
</dbReference>
<dbReference type="RefSeq" id="NP_015051.1">
    <property type="nucleotide sequence ID" value="NM_001184086.1"/>
</dbReference>
<dbReference type="BioGRID" id="35941">
    <property type="interactions" value="64"/>
</dbReference>
<dbReference type="FunCoup" id="Q08984">
    <property type="interactions" value="3"/>
</dbReference>
<dbReference type="IntAct" id="Q08984">
    <property type="interactions" value="2"/>
</dbReference>
<dbReference type="MINT" id="Q08984"/>
<dbReference type="STRING" id="4932.YPL272C"/>
<dbReference type="iPTMnet" id="Q08984"/>
<dbReference type="PaxDb" id="4932-YPL272C"/>
<dbReference type="PeptideAtlas" id="Q08984"/>
<dbReference type="EnsemblFungi" id="YPL272C_mRNA">
    <property type="protein sequence ID" value="YPL272C"/>
    <property type="gene ID" value="YPL272C"/>
</dbReference>
<dbReference type="GeneID" id="855856"/>
<dbReference type="KEGG" id="sce:YPL272C"/>
<dbReference type="AGR" id="SGD:S000006193"/>
<dbReference type="SGD" id="S000006193">
    <property type="gene designation" value="PBI1"/>
</dbReference>
<dbReference type="VEuPathDB" id="FungiDB:YPL272C"/>
<dbReference type="eggNOG" id="ENOG502QWRD">
    <property type="taxonomic scope" value="Eukaryota"/>
</dbReference>
<dbReference type="HOGENOM" id="CLU_520828_0_0_1"/>
<dbReference type="InParanoid" id="Q08984"/>
<dbReference type="OMA" id="MRAWRRN"/>
<dbReference type="OrthoDB" id="4040999at2759"/>
<dbReference type="BioCyc" id="YEAST:G3O-34154-MONOMER"/>
<dbReference type="BioGRID-ORCS" id="855856">
    <property type="hits" value="0 hits in 10 CRISPR screens"/>
</dbReference>
<dbReference type="PRO" id="PR:Q08984"/>
<dbReference type="Proteomes" id="UP000002311">
    <property type="component" value="Chromosome XVI"/>
</dbReference>
<dbReference type="RNAct" id="Q08984">
    <property type="molecule type" value="protein"/>
</dbReference>
<dbReference type="GO" id="GO:0008080">
    <property type="term" value="F:N-acetyltransferase activity"/>
    <property type="evidence" value="ECO:0000318"/>
    <property type="project" value="GO_Central"/>
</dbReference>
<dbReference type="InterPro" id="IPR052058">
    <property type="entry name" value="Alcohol_O-acetyltransferase"/>
</dbReference>
<dbReference type="InterPro" id="IPR010828">
    <property type="entry name" value="Atf2/Sli1-like"/>
</dbReference>
<dbReference type="PANTHER" id="PTHR28037:SF2">
    <property type="entry name" value="ACR018CP"/>
    <property type="match status" value="1"/>
</dbReference>
<dbReference type="PANTHER" id="PTHR28037">
    <property type="entry name" value="ALCOHOL O-ACETYLTRANSFERASE 1-RELATED"/>
    <property type="match status" value="1"/>
</dbReference>
<dbReference type="Pfam" id="PF07247">
    <property type="entry name" value="AATase"/>
    <property type="match status" value="1"/>
</dbReference>
<evidence type="ECO:0000269" key="1">
    <source>
    </source>
</evidence>
<evidence type="ECO:0000303" key="2">
    <source>
    </source>
</evidence>
<accession>Q08984</accession>
<accession>D6W398</accession>